<organism>
    <name type="scientific">Geobacter metallireducens (strain ATCC 53774 / DSM 7210 / GS-15)</name>
    <dbReference type="NCBI Taxonomy" id="269799"/>
    <lineage>
        <taxon>Bacteria</taxon>
        <taxon>Pseudomonadati</taxon>
        <taxon>Thermodesulfobacteriota</taxon>
        <taxon>Desulfuromonadia</taxon>
        <taxon>Geobacterales</taxon>
        <taxon>Geobacteraceae</taxon>
        <taxon>Geobacter</taxon>
    </lineage>
</organism>
<gene>
    <name evidence="1" type="primary">pdxJ</name>
    <name type="ordered locus">Gmet_1885</name>
</gene>
<sequence>MAKLGVNIDHVATIRQARGGVEPDPVAAAALAELAGADGITIHLREDRRHIQDRDLKLLRQTVKTKLNLEMAATAEMVAIALSVKPDMCTLVPEKRQELTTEGGLDVRIAMQGIAEAVERLQNGGIAVSLFVDPDPDQVKASSKVGSDYIEIHTGAFADAKDWKSEQDELERIGNAIKLGAKLGLGINAGHGLNYTNIRKVAALGGIEEYNIGHSIISRAVLVGLDRAVRDMVDLIKYA</sequence>
<reference key="1">
    <citation type="journal article" date="2009" name="BMC Microbiol.">
        <title>The genome sequence of Geobacter metallireducens: features of metabolism, physiology and regulation common and dissimilar to Geobacter sulfurreducens.</title>
        <authorList>
            <person name="Aklujkar M."/>
            <person name="Krushkal J."/>
            <person name="DiBartolo G."/>
            <person name="Lapidus A."/>
            <person name="Land M.L."/>
            <person name="Lovley D.R."/>
        </authorList>
    </citation>
    <scope>NUCLEOTIDE SEQUENCE [LARGE SCALE GENOMIC DNA]</scope>
    <source>
        <strain>ATCC 53774 / DSM 7210 / GS-15</strain>
    </source>
</reference>
<name>PDXJ_GEOMG</name>
<dbReference type="EC" id="2.6.99.2" evidence="1"/>
<dbReference type="EMBL" id="CP000148">
    <property type="protein sequence ID" value="ABB32114.1"/>
    <property type="molecule type" value="Genomic_DNA"/>
</dbReference>
<dbReference type="RefSeq" id="WP_004511959.1">
    <property type="nucleotide sequence ID" value="NC_007517.1"/>
</dbReference>
<dbReference type="SMR" id="Q39UG0"/>
<dbReference type="STRING" id="269799.Gmet_1885"/>
<dbReference type="KEGG" id="gme:Gmet_1885"/>
<dbReference type="eggNOG" id="COG0854">
    <property type="taxonomic scope" value="Bacteria"/>
</dbReference>
<dbReference type="HOGENOM" id="CLU_074563_0_0_7"/>
<dbReference type="UniPathway" id="UPA00244">
    <property type="reaction ID" value="UER00313"/>
</dbReference>
<dbReference type="Proteomes" id="UP000007073">
    <property type="component" value="Chromosome"/>
</dbReference>
<dbReference type="GO" id="GO:0005829">
    <property type="term" value="C:cytosol"/>
    <property type="evidence" value="ECO:0007669"/>
    <property type="project" value="TreeGrafter"/>
</dbReference>
<dbReference type="GO" id="GO:0033856">
    <property type="term" value="F:pyridoxine 5'-phosphate synthase activity"/>
    <property type="evidence" value="ECO:0007669"/>
    <property type="project" value="UniProtKB-EC"/>
</dbReference>
<dbReference type="GO" id="GO:0008615">
    <property type="term" value="P:pyridoxine biosynthetic process"/>
    <property type="evidence" value="ECO:0007669"/>
    <property type="project" value="UniProtKB-UniRule"/>
</dbReference>
<dbReference type="CDD" id="cd00003">
    <property type="entry name" value="PNPsynthase"/>
    <property type="match status" value="1"/>
</dbReference>
<dbReference type="Gene3D" id="3.20.20.70">
    <property type="entry name" value="Aldolase class I"/>
    <property type="match status" value="1"/>
</dbReference>
<dbReference type="HAMAP" id="MF_00279">
    <property type="entry name" value="PdxJ"/>
    <property type="match status" value="1"/>
</dbReference>
<dbReference type="InterPro" id="IPR013785">
    <property type="entry name" value="Aldolase_TIM"/>
</dbReference>
<dbReference type="InterPro" id="IPR004569">
    <property type="entry name" value="PyrdxlP_synth_PdxJ"/>
</dbReference>
<dbReference type="InterPro" id="IPR036130">
    <property type="entry name" value="Pyridoxine-5'_phos_synth"/>
</dbReference>
<dbReference type="NCBIfam" id="TIGR00559">
    <property type="entry name" value="pdxJ"/>
    <property type="match status" value="1"/>
</dbReference>
<dbReference type="NCBIfam" id="NF003623">
    <property type="entry name" value="PRK05265.1-1"/>
    <property type="match status" value="1"/>
</dbReference>
<dbReference type="NCBIfam" id="NF003625">
    <property type="entry name" value="PRK05265.1-3"/>
    <property type="match status" value="1"/>
</dbReference>
<dbReference type="NCBIfam" id="NF003627">
    <property type="entry name" value="PRK05265.1-5"/>
    <property type="match status" value="1"/>
</dbReference>
<dbReference type="PANTHER" id="PTHR30456">
    <property type="entry name" value="PYRIDOXINE 5'-PHOSPHATE SYNTHASE"/>
    <property type="match status" value="1"/>
</dbReference>
<dbReference type="PANTHER" id="PTHR30456:SF0">
    <property type="entry name" value="PYRIDOXINE 5'-PHOSPHATE SYNTHASE"/>
    <property type="match status" value="1"/>
</dbReference>
<dbReference type="Pfam" id="PF03740">
    <property type="entry name" value="PdxJ"/>
    <property type="match status" value="1"/>
</dbReference>
<dbReference type="SUPFAM" id="SSF63892">
    <property type="entry name" value="Pyridoxine 5'-phosphate synthase"/>
    <property type="match status" value="1"/>
</dbReference>
<evidence type="ECO:0000255" key="1">
    <source>
        <dbReference type="HAMAP-Rule" id="MF_00279"/>
    </source>
</evidence>
<accession>Q39UG0</accession>
<comment type="function">
    <text evidence="1">Catalyzes the complicated ring closure reaction between the two acyclic compounds 1-deoxy-D-xylulose-5-phosphate (DXP) and 3-amino-2-oxopropyl phosphate (1-amino-acetone-3-phosphate or AAP) to form pyridoxine 5'-phosphate (PNP) and inorganic phosphate.</text>
</comment>
<comment type="catalytic activity">
    <reaction evidence="1">
        <text>3-amino-2-oxopropyl phosphate + 1-deoxy-D-xylulose 5-phosphate = pyridoxine 5'-phosphate + phosphate + 2 H2O + H(+)</text>
        <dbReference type="Rhea" id="RHEA:15265"/>
        <dbReference type="ChEBI" id="CHEBI:15377"/>
        <dbReference type="ChEBI" id="CHEBI:15378"/>
        <dbReference type="ChEBI" id="CHEBI:43474"/>
        <dbReference type="ChEBI" id="CHEBI:57279"/>
        <dbReference type="ChEBI" id="CHEBI:57792"/>
        <dbReference type="ChEBI" id="CHEBI:58589"/>
        <dbReference type="EC" id="2.6.99.2"/>
    </reaction>
</comment>
<comment type="pathway">
    <text evidence="1">Cofactor biosynthesis; pyridoxine 5'-phosphate biosynthesis; pyridoxine 5'-phosphate from D-erythrose 4-phosphate: step 5/5.</text>
</comment>
<comment type="subunit">
    <text evidence="1">Homooctamer; tetramer of dimers.</text>
</comment>
<comment type="subcellular location">
    <subcellularLocation>
        <location evidence="1">Cytoplasm</location>
    </subcellularLocation>
</comment>
<comment type="similarity">
    <text evidence="1">Belongs to the PNP synthase family.</text>
</comment>
<proteinExistence type="inferred from homology"/>
<protein>
    <recommendedName>
        <fullName evidence="1">Pyridoxine 5'-phosphate synthase</fullName>
        <shortName evidence="1">PNP synthase</shortName>
        <ecNumber evidence="1">2.6.99.2</ecNumber>
    </recommendedName>
</protein>
<keyword id="KW-0963">Cytoplasm</keyword>
<keyword id="KW-0664">Pyridoxine biosynthesis</keyword>
<keyword id="KW-1185">Reference proteome</keyword>
<keyword id="KW-0808">Transferase</keyword>
<feature type="chain" id="PRO_0000231808" description="Pyridoxine 5'-phosphate synthase">
    <location>
        <begin position="1"/>
        <end position="239"/>
    </location>
</feature>
<feature type="active site" description="Proton acceptor" evidence="1">
    <location>
        <position position="43"/>
    </location>
</feature>
<feature type="active site" description="Proton acceptor" evidence="1">
    <location>
        <position position="70"/>
    </location>
</feature>
<feature type="active site" description="Proton donor" evidence="1">
    <location>
        <position position="191"/>
    </location>
</feature>
<feature type="binding site" evidence="1">
    <location>
        <position position="7"/>
    </location>
    <ligand>
        <name>3-amino-2-oxopropyl phosphate</name>
        <dbReference type="ChEBI" id="CHEBI:57279"/>
    </ligand>
</feature>
<feature type="binding site" evidence="1">
    <location>
        <begin position="9"/>
        <end position="10"/>
    </location>
    <ligand>
        <name>1-deoxy-D-xylulose 5-phosphate</name>
        <dbReference type="ChEBI" id="CHEBI:57792"/>
    </ligand>
</feature>
<feature type="binding site" evidence="1">
    <location>
        <position position="18"/>
    </location>
    <ligand>
        <name>3-amino-2-oxopropyl phosphate</name>
        <dbReference type="ChEBI" id="CHEBI:57279"/>
    </ligand>
</feature>
<feature type="binding site" evidence="1">
    <location>
        <position position="45"/>
    </location>
    <ligand>
        <name>1-deoxy-D-xylulose 5-phosphate</name>
        <dbReference type="ChEBI" id="CHEBI:57792"/>
    </ligand>
</feature>
<feature type="binding site" evidence="1">
    <location>
        <position position="50"/>
    </location>
    <ligand>
        <name>1-deoxy-D-xylulose 5-phosphate</name>
        <dbReference type="ChEBI" id="CHEBI:57792"/>
    </ligand>
</feature>
<feature type="binding site" evidence="1">
    <location>
        <position position="100"/>
    </location>
    <ligand>
        <name>1-deoxy-D-xylulose 5-phosphate</name>
        <dbReference type="ChEBI" id="CHEBI:57792"/>
    </ligand>
</feature>
<feature type="binding site" evidence="1">
    <location>
        <position position="192"/>
    </location>
    <ligand>
        <name>3-amino-2-oxopropyl phosphate</name>
        <dbReference type="ChEBI" id="CHEBI:57279"/>
    </ligand>
</feature>
<feature type="binding site" evidence="1">
    <location>
        <begin position="213"/>
        <end position="214"/>
    </location>
    <ligand>
        <name>3-amino-2-oxopropyl phosphate</name>
        <dbReference type="ChEBI" id="CHEBI:57279"/>
    </ligand>
</feature>
<feature type="site" description="Transition state stabilizer" evidence="1">
    <location>
        <position position="151"/>
    </location>
</feature>